<evidence type="ECO:0000250" key="1">
    <source>
        <dbReference type="UniProtKB" id="P83923"/>
    </source>
</evidence>
<evidence type="ECO:0000255" key="2"/>
<evidence type="ECO:0000269" key="3">
    <source>
    </source>
</evidence>
<evidence type="ECO:0000303" key="4">
    <source>
    </source>
</evidence>
<evidence type="ECO:0000305" key="5"/>
<evidence type="ECO:0000305" key="6">
    <source>
    </source>
</evidence>
<feature type="peptide" id="PRO_0000421645" description="CAPA-Periviscerokinin-2" evidence="3">
    <location>
        <begin position="1"/>
        <end position="19"/>
    </location>
</feature>
<feature type="modified residue" description="Valine amide" evidence="3">
    <location>
        <position position="19"/>
    </location>
</feature>
<protein>
    <recommendedName>
        <fullName evidence="4">CAPA-Periviscerokinin-2</fullName>
        <shortName evidence="4">CAPA-PVK-2</shortName>
    </recommendedName>
</protein>
<organism>
    <name type="scientific">Karoophasma biedouwense</name>
    <name type="common">Gladiator</name>
    <name type="synonym">Heel-walker</name>
    <dbReference type="NCBI Taxonomy" id="253133"/>
    <lineage>
        <taxon>Eukaryota</taxon>
        <taxon>Metazoa</taxon>
        <taxon>Ecdysozoa</taxon>
        <taxon>Arthropoda</taxon>
        <taxon>Hexapoda</taxon>
        <taxon>Insecta</taxon>
        <taxon>Pterygota</taxon>
        <taxon>Neoptera</taxon>
        <taxon>Polyneoptera</taxon>
        <taxon>Mantophasmatodea</taxon>
        <taxon>Austrophasmatidae</taxon>
        <taxon>Karoophasma</taxon>
    </lineage>
</organism>
<comment type="function">
    <text evidence="1">Mediates visceral muscle contractile activity (myotropic activity).</text>
</comment>
<comment type="subcellular location">
    <subcellularLocation>
        <location evidence="6">Secreted</location>
    </subcellularLocation>
</comment>
<comment type="similarity">
    <text evidence="2">Belongs to the periviscerokinin family.</text>
</comment>
<dbReference type="GO" id="GO:0005576">
    <property type="term" value="C:extracellular region"/>
    <property type="evidence" value="ECO:0007669"/>
    <property type="project" value="UniProtKB-SubCell"/>
</dbReference>
<dbReference type="GO" id="GO:0007218">
    <property type="term" value="P:neuropeptide signaling pathway"/>
    <property type="evidence" value="ECO:0007669"/>
    <property type="project" value="UniProtKB-KW"/>
</dbReference>
<keyword id="KW-0027">Amidation</keyword>
<keyword id="KW-0903">Direct protein sequencing</keyword>
<keyword id="KW-0527">Neuropeptide</keyword>
<keyword id="KW-0964">Secreted</keyword>
<sequence length="19" mass="2038">SGLQFAVLDGQGFLPFSRV</sequence>
<accession>B3A061</accession>
<reference evidence="5" key="1">
    <citation type="journal article" date="2012" name="Syst. Biol.">
        <title>Peptidomics-based phylogeny and biogeography of Mantophasmatodea (Hexapoda).</title>
        <authorList>
            <person name="Predel R."/>
            <person name="Neupert S."/>
            <person name="Huetteroth W."/>
            <person name="Kahnt J."/>
            <person name="Waidelich D."/>
            <person name="Roth S."/>
        </authorList>
    </citation>
    <scope>PROTEIN SEQUENCE</scope>
    <scope>AMIDATION AT VAL-19</scope>
    <source>
        <tissue evidence="3">Abdominal perisympathetic organs</tissue>
    </source>
</reference>
<name>PVK2_KARBI</name>
<proteinExistence type="evidence at protein level"/>